<protein>
    <recommendedName>
        <fullName evidence="1">Glutamate--tRNA ligase 1</fullName>
        <ecNumber evidence="1">6.1.1.17</ecNumber>
    </recommendedName>
    <alternativeName>
        <fullName evidence="1">Glutamyl-tRNA synthetase 1</fullName>
        <shortName evidence="1">GluRS 1</shortName>
    </alternativeName>
</protein>
<name>SYE1_PARDP</name>
<gene>
    <name evidence="1" type="primary">gltX1</name>
    <name type="ordered locus">Pden_0884</name>
</gene>
<dbReference type="EC" id="6.1.1.17" evidence="1"/>
<dbReference type="EMBL" id="CP000489">
    <property type="protein sequence ID" value="ABL68995.1"/>
    <property type="molecule type" value="Genomic_DNA"/>
</dbReference>
<dbReference type="RefSeq" id="WP_011747223.1">
    <property type="nucleotide sequence ID" value="NC_008686.1"/>
</dbReference>
<dbReference type="SMR" id="A1B0F1"/>
<dbReference type="STRING" id="318586.Pden_0884"/>
<dbReference type="EnsemblBacteria" id="ABL68995">
    <property type="protein sequence ID" value="ABL68995"/>
    <property type="gene ID" value="Pden_0884"/>
</dbReference>
<dbReference type="GeneID" id="93452108"/>
<dbReference type="KEGG" id="pde:Pden_0884"/>
<dbReference type="eggNOG" id="COG0008">
    <property type="taxonomic scope" value="Bacteria"/>
</dbReference>
<dbReference type="HOGENOM" id="CLU_015768_6_1_5"/>
<dbReference type="OrthoDB" id="9807503at2"/>
<dbReference type="Proteomes" id="UP000000361">
    <property type="component" value="Chromosome 1"/>
</dbReference>
<dbReference type="GO" id="GO:0005737">
    <property type="term" value="C:cytoplasm"/>
    <property type="evidence" value="ECO:0007669"/>
    <property type="project" value="UniProtKB-SubCell"/>
</dbReference>
<dbReference type="GO" id="GO:0005524">
    <property type="term" value="F:ATP binding"/>
    <property type="evidence" value="ECO:0007669"/>
    <property type="project" value="UniProtKB-UniRule"/>
</dbReference>
<dbReference type="GO" id="GO:0004818">
    <property type="term" value="F:glutamate-tRNA ligase activity"/>
    <property type="evidence" value="ECO:0007669"/>
    <property type="project" value="UniProtKB-UniRule"/>
</dbReference>
<dbReference type="GO" id="GO:0000049">
    <property type="term" value="F:tRNA binding"/>
    <property type="evidence" value="ECO:0007669"/>
    <property type="project" value="InterPro"/>
</dbReference>
<dbReference type="GO" id="GO:0006424">
    <property type="term" value="P:glutamyl-tRNA aminoacylation"/>
    <property type="evidence" value="ECO:0007669"/>
    <property type="project" value="UniProtKB-UniRule"/>
</dbReference>
<dbReference type="Gene3D" id="1.10.10.350">
    <property type="match status" value="1"/>
</dbReference>
<dbReference type="Gene3D" id="3.40.50.620">
    <property type="entry name" value="HUPs"/>
    <property type="match status" value="1"/>
</dbReference>
<dbReference type="HAMAP" id="MF_00022">
    <property type="entry name" value="Glu_tRNA_synth_type1"/>
    <property type="match status" value="1"/>
</dbReference>
<dbReference type="InterPro" id="IPR045462">
    <property type="entry name" value="aa-tRNA-synth_I_cd-bd"/>
</dbReference>
<dbReference type="InterPro" id="IPR020751">
    <property type="entry name" value="aa-tRNA-synth_I_codon-bd_sub2"/>
</dbReference>
<dbReference type="InterPro" id="IPR001412">
    <property type="entry name" value="aa-tRNA-synth_I_CS"/>
</dbReference>
<dbReference type="InterPro" id="IPR008925">
    <property type="entry name" value="aa_tRNA-synth_I_cd-bd_sf"/>
</dbReference>
<dbReference type="InterPro" id="IPR004527">
    <property type="entry name" value="Glu-tRNA-ligase_bac/mito"/>
</dbReference>
<dbReference type="InterPro" id="IPR000924">
    <property type="entry name" value="Glu/Gln-tRNA-synth"/>
</dbReference>
<dbReference type="InterPro" id="IPR020058">
    <property type="entry name" value="Glu/Gln-tRNA-synth_Ib_cat-dom"/>
</dbReference>
<dbReference type="InterPro" id="IPR049940">
    <property type="entry name" value="GluQ/Sye"/>
</dbReference>
<dbReference type="InterPro" id="IPR014729">
    <property type="entry name" value="Rossmann-like_a/b/a_fold"/>
</dbReference>
<dbReference type="NCBIfam" id="TIGR00464">
    <property type="entry name" value="gltX_bact"/>
    <property type="match status" value="1"/>
</dbReference>
<dbReference type="PANTHER" id="PTHR43311">
    <property type="entry name" value="GLUTAMATE--TRNA LIGASE"/>
    <property type="match status" value="1"/>
</dbReference>
<dbReference type="PANTHER" id="PTHR43311:SF2">
    <property type="entry name" value="GLUTAMATE--TRNA LIGASE, MITOCHONDRIAL-RELATED"/>
    <property type="match status" value="1"/>
</dbReference>
<dbReference type="Pfam" id="PF19269">
    <property type="entry name" value="Anticodon_2"/>
    <property type="match status" value="1"/>
</dbReference>
<dbReference type="Pfam" id="PF00749">
    <property type="entry name" value="tRNA-synt_1c"/>
    <property type="match status" value="1"/>
</dbReference>
<dbReference type="PRINTS" id="PR00987">
    <property type="entry name" value="TRNASYNTHGLU"/>
</dbReference>
<dbReference type="SUPFAM" id="SSF48163">
    <property type="entry name" value="An anticodon-binding domain of class I aminoacyl-tRNA synthetases"/>
    <property type="match status" value="1"/>
</dbReference>
<dbReference type="SUPFAM" id="SSF52374">
    <property type="entry name" value="Nucleotidylyl transferase"/>
    <property type="match status" value="1"/>
</dbReference>
<dbReference type="PROSITE" id="PS00178">
    <property type="entry name" value="AA_TRNA_LIGASE_I"/>
    <property type="match status" value="1"/>
</dbReference>
<reference key="1">
    <citation type="submission" date="2006-12" db="EMBL/GenBank/DDBJ databases">
        <title>Complete sequence of chromosome 1 of Paracoccus denitrificans PD1222.</title>
        <authorList>
            <person name="Copeland A."/>
            <person name="Lucas S."/>
            <person name="Lapidus A."/>
            <person name="Barry K."/>
            <person name="Detter J.C."/>
            <person name="Glavina del Rio T."/>
            <person name="Hammon N."/>
            <person name="Israni S."/>
            <person name="Dalin E."/>
            <person name="Tice H."/>
            <person name="Pitluck S."/>
            <person name="Munk A.C."/>
            <person name="Brettin T."/>
            <person name="Bruce D."/>
            <person name="Han C."/>
            <person name="Tapia R."/>
            <person name="Gilna P."/>
            <person name="Schmutz J."/>
            <person name="Larimer F."/>
            <person name="Land M."/>
            <person name="Hauser L."/>
            <person name="Kyrpides N."/>
            <person name="Lykidis A."/>
            <person name="Spiro S."/>
            <person name="Richardson D.J."/>
            <person name="Moir J.W.B."/>
            <person name="Ferguson S.J."/>
            <person name="van Spanning R.J.M."/>
            <person name="Richardson P."/>
        </authorList>
    </citation>
    <scope>NUCLEOTIDE SEQUENCE [LARGE SCALE GENOMIC DNA]</scope>
    <source>
        <strain>Pd 1222</strain>
    </source>
</reference>
<evidence type="ECO:0000255" key="1">
    <source>
        <dbReference type="HAMAP-Rule" id="MF_00022"/>
    </source>
</evidence>
<accession>A1B0F1</accession>
<comment type="function">
    <text evidence="1">Catalyzes the attachment of glutamate to tRNA(Glu) in a two-step reaction: glutamate is first activated by ATP to form Glu-AMP and then transferred to the acceptor end of tRNA(Glu).</text>
</comment>
<comment type="catalytic activity">
    <reaction evidence="1">
        <text>tRNA(Glu) + L-glutamate + ATP = L-glutamyl-tRNA(Glu) + AMP + diphosphate</text>
        <dbReference type="Rhea" id="RHEA:23540"/>
        <dbReference type="Rhea" id="RHEA-COMP:9663"/>
        <dbReference type="Rhea" id="RHEA-COMP:9680"/>
        <dbReference type="ChEBI" id="CHEBI:29985"/>
        <dbReference type="ChEBI" id="CHEBI:30616"/>
        <dbReference type="ChEBI" id="CHEBI:33019"/>
        <dbReference type="ChEBI" id="CHEBI:78442"/>
        <dbReference type="ChEBI" id="CHEBI:78520"/>
        <dbReference type="ChEBI" id="CHEBI:456215"/>
        <dbReference type="EC" id="6.1.1.17"/>
    </reaction>
</comment>
<comment type="subunit">
    <text evidence="1">Monomer.</text>
</comment>
<comment type="subcellular location">
    <subcellularLocation>
        <location evidence="1">Cytoplasm</location>
    </subcellularLocation>
</comment>
<comment type="similarity">
    <text evidence="1">Belongs to the class-I aminoacyl-tRNA synthetase family. Glutamate--tRNA ligase type 1 subfamily.</text>
</comment>
<keyword id="KW-0030">Aminoacyl-tRNA synthetase</keyword>
<keyword id="KW-0067">ATP-binding</keyword>
<keyword id="KW-0963">Cytoplasm</keyword>
<keyword id="KW-0436">Ligase</keyword>
<keyword id="KW-0547">Nucleotide-binding</keyword>
<keyword id="KW-0648">Protein biosynthesis</keyword>
<keyword id="KW-1185">Reference proteome</keyword>
<organism>
    <name type="scientific">Paracoccus denitrificans (strain Pd 1222)</name>
    <dbReference type="NCBI Taxonomy" id="318586"/>
    <lineage>
        <taxon>Bacteria</taxon>
        <taxon>Pseudomonadati</taxon>
        <taxon>Pseudomonadota</taxon>
        <taxon>Alphaproteobacteria</taxon>
        <taxon>Rhodobacterales</taxon>
        <taxon>Paracoccaceae</taxon>
        <taxon>Paracoccus</taxon>
    </lineage>
</organism>
<sequence>MTTTRFAPSPTGHIHVGNLRTALMNYLIARKAGGTFILRLDDTDRERSKQEYADGIQRDLEWLGLTWDRIERQSDRLDRYAEAAEGLRAAGRLYEVFETPTELDLKRKKQLNMGKPPVYDRAGLKLSAEDKDRLRAEGRAGYWRFLLDQERIEWADGILGDISIDAASVSDPVLIRADGQVLYTFASSVDDAEMGVTHIVRGADHVTNTATQIQIIRALGSEPPAFAHHSLLTGAQGEELSKRLGTLSIRDLRESGVAPEALLSLMARLGSSQPVELKMSLDELAEGFDLGQFGASPTKFDAEDLWPLTREANQSRPLAEVRDRIAALGVPDELVERFWRVASQNITKLDDLAGWWQIFSTGAEPQIDPEDADFIAEAMKLLPPPPYTDATWGEFTNAVKQATGRKGKGLFMPLRKALTGQAHGPDMSEVMPLLQVVRARG</sequence>
<feature type="chain" id="PRO_0000367729" description="Glutamate--tRNA ligase 1">
    <location>
        <begin position="1"/>
        <end position="441"/>
    </location>
</feature>
<feature type="short sequence motif" description="'HIGH' region" evidence="1">
    <location>
        <begin position="8"/>
        <end position="18"/>
    </location>
</feature>
<feature type="short sequence motif" description="'KMSKS' region" evidence="1">
    <location>
        <begin position="239"/>
        <end position="243"/>
    </location>
</feature>
<feature type="binding site" evidence="1">
    <location>
        <position position="242"/>
    </location>
    <ligand>
        <name>ATP</name>
        <dbReference type="ChEBI" id="CHEBI:30616"/>
    </ligand>
</feature>
<proteinExistence type="inferred from homology"/>